<name>H13_CAEEL</name>
<comment type="function">
    <text evidence="1">Histones H1 are necessary for the condensation of nucleosome chains into higher-order structures.</text>
</comment>
<comment type="subcellular location">
    <subcellularLocation>
        <location evidence="3">Nucleus</location>
    </subcellularLocation>
    <subcellularLocation>
        <location evidence="3">Chromosome</location>
    </subcellularLocation>
</comment>
<comment type="similarity">
    <text evidence="3">Belongs to the histone H1/H5 family.</text>
</comment>
<reference key="1">
    <citation type="journal article" date="2001" name="Development">
        <title>A single histone H1 isoform (H1.1) is essential for chromatin silencing and germline development in Caenorhabditis elegans.</title>
        <authorList>
            <person name="Jedrusik M.A."/>
            <person name="Schulze E."/>
        </authorList>
    </citation>
    <scope>NUCLEOTIDE SEQUENCE [MRNA]</scope>
    <source>
        <strain>him-8</strain>
    </source>
</reference>
<reference key="2">
    <citation type="journal article" date="1998" name="Science">
        <title>Genome sequence of the nematode C. elegans: a platform for investigating biology.</title>
        <authorList>
            <consortium name="The C. elegans sequencing consortium"/>
        </authorList>
    </citation>
    <scope>NUCLEOTIDE SEQUENCE [LARGE SCALE GENOMIC DNA]</scope>
    <source>
        <strain>Bristol N2</strain>
    </source>
</reference>
<gene>
    <name type="primary">hil-3</name>
    <name type="ORF">F22F1.1</name>
</gene>
<sequence length="208" mass="21707">MSDTVVASAAVQAPAKTVKSPKAAKTTKVPKAKKPVAHPPYINMVTAAINGLKERKGSSKIAILKYITKNYNVGDQIIKINARLRDTLNKGVVSKALVQSVGTGASGRFRVTEKKAAAAKKPVAKKAATGEKKAKKPVAQKAATGEKKAKKTTATKTKKTADKVKKVKSPKKIAKPTAKKVAKSPAKKSAPKKAAAAKPAKKAVAPKT</sequence>
<feature type="initiator methionine" description="Removed" evidence="2">
    <location>
        <position position="1"/>
    </location>
</feature>
<feature type="chain" id="PRO_0000195983" description="Histone H1.3">
    <location>
        <begin position="2"/>
        <end position="208"/>
    </location>
</feature>
<feature type="domain" description="H15" evidence="3">
    <location>
        <begin position="37"/>
        <end position="113"/>
    </location>
</feature>
<feature type="region of interest" description="Disordered" evidence="4">
    <location>
        <begin position="113"/>
        <end position="208"/>
    </location>
</feature>
<feature type="compositionally biased region" description="Basic residues" evidence="4">
    <location>
        <begin position="148"/>
        <end position="158"/>
    </location>
</feature>
<feature type="compositionally biased region" description="Basic residues" evidence="4">
    <location>
        <begin position="165"/>
        <end position="191"/>
    </location>
</feature>
<feature type="compositionally biased region" description="Low complexity" evidence="4">
    <location>
        <begin position="192"/>
        <end position="208"/>
    </location>
</feature>
<feature type="modified residue" description="N-acetylserine" evidence="2">
    <location>
        <position position="2"/>
    </location>
</feature>
<dbReference type="EMBL" id="AF012253">
    <property type="protein sequence ID" value="AAB66471.1"/>
    <property type="molecule type" value="mRNA"/>
</dbReference>
<dbReference type="EMBL" id="FO080273">
    <property type="protein sequence ID" value="CCD62510.1"/>
    <property type="molecule type" value="Genomic_DNA"/>
</dbReference>
<dbReference type="PIR" id="T16138">
    <property type="entry name" value="T16138"/>
</dbReference>
<dbReference type="RefSeq" id="NP_509375.1">
    <property type="nucleotide sequence ID" value="NM_076974.6"/>
</dbReference>
<dbReference type="SMR" id="Q19743"/>
<dbReference type="BioGRID" id="45995">
    <property type="interactions" value="4"/>
</dbReference>
<dbReference type="FunCoup" id="Q19743">
    <property type="interactions" value="368"/>
</dbReference>
<dbReference type="STRING" id="6239.F22F1.1.1"/>
<dbReference type="iPTMnet" id="Q19743"/>
<dbReference type="PaxDb" id="6239-F22F1.1"/>
<dbReference type="PeptideAtlas" id="Q19743"/>
<dbReference type="EnsemblMetazoa" id="F22F1.1.1">
    <property type="protein sequence ID" value="F22F1.1.1"/>
    <property type="gene ID" value="WBGene00001854"/>
</dbReference>
<dbReference type="GeneID" id="181073"/>
<dbReference type="KEGG" id="cel:CELE_F22F1.1"/>
<dbReference type="UCSC" id="F22F1.1">
    <property type="organism name" value="c. elegans"/>
</dbReference>
<dbReference type="AGR" id="WB:WBGene00001854"/>
<dbReference type="CTD" id="181073"/>
<dbReference type="WormBase" id="F22F1.1">
    <property type="protein sequence ID" value="CE04443"/>
    <property type="gene ID" value="WBGene00001854"/>
    <property type="gene designation" value="hil-3"/>
</dbReference>
<dbReference type="eggNOG" id="KOG4012">
    <property type="taxonomic scope" value="Eukaryota"/>
</dbReference>
<dbReference type="GeneTree" id="ENSGT00970000195980"/>
<dbReference type="HOGENOM" id="CLU_052897_1_1_1"/>
<dbReference type="InParanoid" id="Q19743"/>
<dbReference type="OMA" id="YINMVTA"/>
<dbReference type="OrthoDB" id="1110759at2759"/>
<dbReference type="PhylomeDB" id="Q19743"/>
<dbReference type="Reactome" id="R-CEL-2559584">
    <property type="pathway name" value="Formation of Senescence-Associated Heterochromatin Foci (SAHF)"/>
</dbReference>
<dbReference type="PRO" id="PR:Q19743"/>
<dbReference type="Proteomes" id="UP000001940">
    <property type="component" value="Chromosome X"/>
</dbReference>
<dbReference type="Bgee" id="WBGene00001854">
    <property type="expression patterns" value="Expressed in pharyngeal muscle cell (C elegans) and 5 other cell types or tissues"/>
</dbReference>
<dbReference type="GO" id="GO:0000786">
    <property type="term" value="C:nucleosome"/>
    <property type="evidence" value="ECO:0007669"/>
    <property type="project" value="InterPro"/>
</dbReference>
<dbReference type="GO" id="GO:0005634">
    <property type="term" value="C:nucleus"/>
    <property type="evidence" value="ECO:0000318"/>
    <property type="project" value="GO_Central"/>
</dbReference>
<dbReference type="GO" id="GO:0003690">
    <property type="term" value="F:double-stranded DNA binding"/>
    <property type="evidence" value="ECO:0000318"/>
    <property type="project" value="GO_Central"/>
</dbReference>
<dbReference type="GO" id="GO:0031492">
    <property type="term" value="F:nucleosomal DNA binding"/>
    <property type="evidence" value="ECO:0000318"/>
    <property type="project" value="GO_Central"/>
</dbReference>
<dbReference type="GO" id="GO:0030527">
    <property type="term" value="F:structural constituent of chromatin"/>
    <property type="evidence" value="ECO:0007669"/>
    <property type="project" value="InterPro"/>
</dbReference>
<dbReference type="GO" id="GO:0030261">
    <property type="term" value="P:chromosome condensation"/>
    <property type="evidence" value="ECO:0000318"/>
    <property type="project" value="GO_Central"/>
</dbReference>
<dbReference type="GO" id="GO:0045910">
    <property type="term" value="P:negative regulation of DNA recombination"/>
    <property type="evidence" value="ECO:0000318"/>
    <property type="project" value="GO_Central"/>
</dbReference>
<dbReference type="GO" id="GO:0006334">
    <property type="term" value="P:nucleosome assembly"/>
    <property type="evidence" value="ECO:0007669"/>
    <property type="project" value="InterPro"/>
</dbReference>
<dbReference type="CDD" id="cd00073">
    <property type="entry name" value="H15"/>
    <property type="match status" value="1"/>
</dbReference>
<dbReference type="FunFam" id="1.10.10.10:FF:000140">
    <property type="entry name" value="Histone H1.0"/>
    <property type="match status" value="1"/>
</dbReference>
<dbReference type="Gene3D" id="1.10.10.10">
    <property type="entry name" value="Winged helix-like DNA-binding domain superfamily/Winged helix DNA-binding domain"/>
    <property type="match status" value="1"/>
</dbReference>
<dbReference type="InterPro" id="IPR005819">
    <property type="entry name" value="H1/H5"/>
</dbReference>
<dbReference type="InterPro" id="IPR005818">
    <property type="entry name" value="Histone_H1/H5_H15"/>
</dbReference>
<dbReference type="InterPro" id="IPR036388">
    <property type="entry name" value="WH-like_DNA-bd_sf"/>
</dbReference>
<dbReference type="InterPro" id="IPR036390">
    <property type="entry name" value="WH_DNA-bd_sf"/>
</dbReference>
<dbReference type="PANTHER" id="PTHR11467:SF36">
    <property type="entry name" value="HISTONE 24-RELATED"/>
    <property type="match status" value="1"/>
</dbReference>
<dbReference type="PANTHER" id="PTHR11467">
    <property type="entry name" value="HISTONE H1"/>
    <property type="match status" value="1"/>
</dbReference>
<dbReference type="Pfam" id="PF00538">
    <property type="entry name" value="Linker_histone"/>
    <property type="match status" value="1"/>
</dbReference>
<dbReference type="PRINTS" id="PR00624">
    <property type="entry name" value="HISTONEH5"/>
</dbReference>
<dbReference type="SMART" id="SM00526">
    <property type="entry name" value="H15"/>
    <property type="match status" value="1"/>
</dbReference>
<dbReference type="SUPFAM" id="SSF46785">
    <property type="entry name" value="Winged helix' DNA-binding domain"/>
    <property type="match status" value="1"/>
</dbReference>
<dbReference type="PROSITE" id="PS51504">
    <property type="entry name" value="H15"/>
    <property type="match status" value="1"/>
</dbReference>
<evidence type="ECO:0000250" key="1"/>
<evidence type="ECO:0000250" key="2">
    <source>
        <dbReference type="UniProtKB" id="P10771"/>
    </source>
</evidence>
<evidence type="ECO:0000255" key="3">
    <source>
        <dbReference type="PROSITE-ProRule" id="PRU00837"/>
    </source>
</evidence>
<evidence type="ECO:0000256" key="4">
    <source>
        <dbReference type="SAM" id="MobiDB-lite"/>
    </source>
</evidence>
<keyword id="KW-0007">Acetylation</keyword>
<keyword id="KW-0158">Chromosome</keyword>
<keyword id="KW-0238">DNA-binding</keyword>
<keyword id="KW-0539">Nucleus</keyword>
<keyword id="KW-1185">Reference proteome</keyword>
<proteinExistence type="evidence at transcript level"/>
<protein>
    <recommendedName>
        <fullName>Histone H1.3</fullName>
    </recommendedName>
    <alternativeName>
        <fullName>Histone H1-like protein 3</fullName>
    </alternativeName>
</protein>
<organism>
    <name type="scientific">Caenorhabditis elegans</name>
    <dbReference type="NCBI Taxonomy" id="6239"/>
    <lineage>
        <taxon>Eukaryota</taxon>
        <taxon>Metazoa</taxon>
        <taxon>Ecdysozoa</taxon>
        <taxon>Nematoda</taxon>
        <taxon>Chromadorea</taxon>
        <taxon>Rhabditida</taxon>
        <taxon>Rhabditina</taxon>
        <taxon>Rhabditomorpha</taxon>
        <taxon>Rhabditoidea</taxon>
        <taxon>Rhabditidae</taxon>
        <taxon>Peloderinae</taxon>
        <taxon>Caenorhabditis</taxon>
    </lineage>
</organism>
<accession>Q19743</accession>